<organism>
    <name type="scientific">Brucella suis biovar 1 (strain 1330)</name>
    <dbReference type="NCBI Taxonomy" id="204722"/>
    <lineage>
        <taxon>Bacteria</taxon>
        <taxon>Pseudomonadati</taxon>
        <taxon>Pseudomonadota</taxon>
        <taxon>Alphaproteobacteria</taxon>
        <taxon>Hyphomicrobiales</taxon>
        <taxon>Brucellaceae</taxon>
        <taxon>Brucella/Ochrobactrum group</taxon>
        <taxon>Brucella</taxon>
    </lineage>
</organism>
<sequence>MKPLLSLDRVSVSRDGRNVLDKLSLSLAAGERLALIGDNGVGKTTLLRTIVGLEPASGEITAFGINCRNESDFRKIRAKAAYLFQNPDDQLFCPTVIDDVAFGPLNLGLSRQEAMELSNGLLHDLGLGHLAGRITHHLSGGEKRLVSLAAVLAMQPQVLLLDEPTNALDEKHLERMLAILSAQKIAMIIVSHDWEILERLTDRAVVLRNGKLLPAMLHRHSQWSEQVHLHYVEAEGSAL</sequence>
<comment type="function">
    <text evidence="1">Probably part of an ABC transporter complex. Responsible for energy coupling to the transport system (By similarity).</text>
</comment>
<comment type="subcellular location">
    <subcellularLocation>
        <location evidence="1">Cell inner membrane</location>
        <topology evidence="1">Peripheral membrane protein</topology>
    </subcellularLocation>
</comment>
<comment type="similarity">
    <text evidence="3">Belongs to the ABC transporter superfamily.</text>
</comment>
<proteinExistence type="inferred from homology"/>
<name>Y1368_BRUSU</name>
<evidence type="ECO:0000250" key="1"/>
<evidence type="ECO:0000255" key="2">
    <source>
        <dbReference type="PROSITE-ProRule" id="PRU00434"/>
    </source>
</evidence>
<evidence type="ECO:0000305" key="3"/>
<feature type="chain" id="PRO_0000091992" description="Putative ABC transporter ATP-binding protein BR1368/BS1330_I1363">
    <location>
        <begin position="1"/>
        <end position="239"/>
    </location>
</feature>
<feature type="domain" description="ABC transporter" evidence="2">
    <location>
        <begin position="5"/>
        <end position="234"/>
    </location>
</feature>
<feature type="binding site" evidence="2">
    <location>
        <begin position="37"/>
        <end position="44"/>
    </location>
    <ligand>
        <name>ATP</name>
        <dbReference type="ChEBI" id="CHEBI:30616"/>
    </ligand>
</feature>
<accession>Q8FZV2</accession>
<accession>G0KB53</accession>
<reference key="1">
    <citation type="journal article" date="2002" name="Proc. Natl. Acad. Sci. U.S.A.">
        <title>The Brucella suis genome reveals fundamental similarities between animal and plant pathogens and symbionts.</title>
        <authorList>
            <person name="Paulsen I.T."/>
            <person name="Seshadri R."/>
            <person name="Nelson K.E."/>
            <person name="Eisen J.A."/>
            <person name="Heidelberg J.F."/>
            <person name="Read T.D."/>
            <person name="Dodson R.J."/>
            <person name="Umayam L.A."/>
            <person name="Brinkac L.M."/>
            <person name="Beanan M.J."/>
            <person name="Daugherty S.C."/>
            <person name="DeBoy R.T."/>
            <person name="Durkin A.S."/>
            <person name="Kolonay J.F."/>
            <person name="Madupu R."/>
            <person name="Nelson W.C."/>
            <person name="Ayodeji B."/>
            <person name="Kraul M."/>
            <person name="Shetty J."/>
            <person name="Malek J.A."/>
            <person name="Van Aken S.E."/>
            <person name="Riedmuller S."/>
            <person name="Tettelin H."/>
            <person name="Gill S.R."/>
            <person name="White O."/>
            <person name="Salzberg S.L."/>
            <person name="Hoover D.L."/>
            <person name="Lindler L.E."/>
            <person name="Halling S.M."/>
            <person name="Boyle S.M."/>
            <person name="Fraser C.M."/>
        </authorList>
    </citation>
    <scope>NUCLEOTIDE SEQUENCE [LARGE SCALE GENOMIC DNA]</scope>
    <source>
        <strain>1330</strain>
    </source>
</reference>
<reference key="2">
    <citation type="journal article" date="2011" name="J. Bacteriol.">
        <title>Revised genome sequence of Brucella suis 1330.</title>
        <authorList>
            <person name="Tae H."/>
            <person name="Shallom S."/>
            <person name="Settlage R."/>
            <person name="Preston D."/>
            <person name="Adams L.G."/>
            <person name="Garner H.R."/>
        </authorList>
    </citation>
    <scope>NUCLEOTIDE SEQUENCE [LARGE SCALE GENOMIC DNA]</scope>
    <source>
        <strain>1330</strain>
    </source>
</reference>
<gene>
    <name type="ordered locus">BR1368</name>
    <name type="ordered locus">BS1330_I1363</name>
</gene>
<protein>
    <recommendedName>
        <fullName>Putative ABC transporter ATP-binding protein BR1368/BS1330_I1363</fullName>
        <ecNumber>7.-.-.-</ecNumber>
    </recommendedName>
</protein>
<dbReference type="EC" id="7.-.-.-"/>
<dbReference type="EMBL" id="AE014291">
    <property type="protein sequence ID" value="AAN30282.1"/>
    <property type="molecule type" value="Genomic_DNA"/>
</dbReference>
<dbReference type="EMBL" id="CP002997">
    <property type="protein sequence ID" value="AEM18699.1"/>
    <property type="molecule type" value="Genomic_DNA"/>
</dbReference>
<dbReference type="RefSeq" id="WP_004690965.1">
    <property type="nucleotide sequence ID" value="NZ_KN046804.1"/>
</dbReference>
<dbReference type="SMR" id="Q8FZV2"/>
<dbReference type="KEGG" id="bms:BR1368"/>
<dbReference type="KEGG" id="bsi:BS1330_I1363"/>
<dbReference type="PATRIC" id="fig|204722.21.peg.844"/>
<dbReference type="HOGENOM" id="CLU_000604_1_22_5"/>
<dbReference type="PhylomeDB" id="Q8FZV2"/>
<dbReference type="Proteomes" id="UP000007104">
    <property type="component" value="Chromosome I"/>
</dbReference>
<dbReference type="GO" id="GO:0043190">
    <property type="term" value="C:ATP-binding cassette (ABC) transporter complex"/>
    <property type="evidence" value="ECO:0007669"/>
    <property type="project" value="TreeGrafter"/>
</dbReference>
<dbReference type="GO" id="GO:0005524">
    <property type="term" value="F:ATP binding"/>
    <property type="evidence" value="ECO:0007669"/>
    <property type="project" value="UniProtKB-KW"/>
</dbReference>
<dbReference type="GO" id="GO:0016887">
    <property type="term" value="F:ATP hydrolysis activity"/>
    <property type="evidence" value="ECO:0007669"/>
    <property type="project" value="InterPro"/>
</dbReference>
<dbReference type="GO" id="GO:0042626">
    <property type="term" value="F:ATPase-coupled transmembrane transporter activity"/>
    <property type="evidence" value="ECO:0007669"/>
    <property type="project" value="TreeGrafter"/>
</dbReference>
<dbReference type="CDD" id="cd03225">
    <property type="entry name" value="ABC_cobalt_CbiO_domain1"/>
    <property type="match status" value="1"/>
</dbReference>
<dbReference type="Gene3D" id="3.40.50.300">
    <property type="entry name" value="P-loop containing nucleotide triphosphate hydrolases"/>
    <property type="match status" value="1"/>
</dbReference>
<dbReference type="InterPro" id="IPR003593">
    <property type="entry name" value="AAA+_ATPase"/>
</dbReference>
<dbReference type="InterPro" id="IPR003439">
    <property type="entry name" value="ABC_transporter-like_ATP-bd"/>
</dbReference>
<dbReference type="InterPro" id="IPR017871">
    <property type="entry name" value="ABC_transporter-like_CS"/>
</dbReference>
<dbReference type="InterPro" id="IPR015856">
    <property type="entry name" value="ABC_transpr_CbiO/EcfA_su"/>
</dbReference>
<dbReference type="InterPro" id="IPR050095">
    <property type="entry name" value="ECF_ABC_transporter_ATP-bd"/>
</dbReference>
<dbReference type="InterPro" id="IPR027417">
    <property type="entry name" value="P-loop_NTPase"/>
</dbReference>
<dbReference type="PANTHER" id="PTHR43553:SF24">
    <property type="entry name" value="ENERGY-COUPLING FACTOR TRANSPORTER ATP-BINDING PROTEIN ECFA1"/>
    <property type="match status" value="1"/>
</dbReference>
<dbReference type="PANTHER" id="PTHR43553">
    <property type="entry name" value="HEAVY METAL TRANSPORTER"/>
    <property type="match status" value="1"/>
</dbReference>
<dbReference type="Pfam" id="PF00005">
    <property type="entry name" value="ABC_tran"/>
    <property type="match status" value="1"/>
</dbReference>
<dbReference type="SMART" id="SM00382">
    <property type="entry name" value="AAA"/>
    <property type="match status" value="1"/>
</dbReference>
<dbReference type="SUPFAM" id="SSF52540">
    <property type="entry name" value="P-loop containing nucleoside triphosphate hydrolases"/>
    <property type="match status" value="1"/>
</dbReference>
<dbReference type="PROSITE" id="PS00211">
    <property type="entry name" value="ABC_TRANSPORTER_1"/>
    <property type="match status" value="1"/>
</dbReference>
<dbReference type="PROSITE" id="PS50893">
    <property type="entry name" value="ABC_TRANSPORTER_2"/>
    <property type="match status" value="1"/>
</dbReference>
<keyword id="KW-0067">ATP-binding</keyword>
<keyword id="KW-0997">Cell inner membrane</keyword>
<keyword id="KW-1003">Cell membrane</keyword>
<keyword id="KW-0472">Membrane</keyword>
<keyword id="KW-0547">Nucleotide-binding</keyword>
<keyword id="KW-1278">Translocase</keyword>
<keyword id="KW-0813">Transport</keyword>